<organism>
    <name type="scientific">Homo sapiens</name>
    <name type="common">Human</name>
    <dbReference type="NCBI Taxonomy" id="9606"/>
    <lineage>
        <taxon>Eukaryota</taxon>
        <taxon>Metazoa</taxon>
        <taxon>Chordata</taxon>
        <taxon>Craniata</taxon>
        <taxon>Vertebrata</taxon>
        <taxon>Euteleostomi</taxon>
        <taxon>Mammalia</taxon>
        <taxon>Eutheria</taxon>
        <taxon>Euarchontoglires</taxon>
        <taxon>Primates</taxon>
        <taxon>Haplorrhini</taxon>
        <taxon>Catarrhini</taxon>
        <taxon>Hominidae</taxon>
        <taxon>Homo</taxon>
    </lineage>
</organism>
<accession>Q8N6F1</accession>
<accession>B7Z5I2</accession>
<accession>F5H5P9</accession>
<accession>Q5QT57</accession>
<accession>Q8N8X0</accession>
<keyword id="KW-0025">Alternative splicing</keyword>
<keyword id="KW-0965">Cell junction</keyword>
<keyword id="KW-1003">Cell membrane</keyword>
<keyword id="KW-0225">Disease variant</keyword>
<keyword id="KW-1015">Disulfide bond</keyword>
<keyword id="KW-0460">Magnesium</keyword>
<keyword id="KW-0472">Membrane</keyword>
<keyword id="KW-0982">Primary hypomagnesemia</keyword>
<keyword id="KW-1267">Proteomics identification</keyword>
<keyword id="KW-1185">Reference proteome</keyword>
<keyword id="KW-0716">Sensory transduction</keyword>
<keyword id="KW-0796">Tight junction</keyword>
<keyword id="KW-0812">Transmembrane</keyword>
<keyword id="KW-1133">Transmembrane helix</keyword>
<keyword id="KW-0844">Vision</keyword>
<name>CLD19_HUMAN</name>
<evidence type="ECO:0000250" key="1">
    <source>
        <dbReference type="UniProtKB" id="Q91Y55"/>
    </source>
</evidence>
<evidence type="ECO:0000250" key="2">
    <source>
        <dbReference type="UniProtKB" id="Q925N4"/>
    </source>
</evidence>
<evidence type="ECO:0000250" key="3">
    <source>
        <dbReference type="UniProtKB" id="Q9ET38"/>
    </source>
</evidence>
<evidence type="ECO:0000250" key="4">
    <source>
        <dbReference type="UniProtKB" id="Q9Y5I7"/>
    </source>
</evidence>
<evidence type="ECO:0000255" key="5"/>
<evidence type="ECO:0000256" key="6">
    <source>
        <dbReference type="SAM" id="MobiDB-lite"/>
    </source>
</evidence>
<evidence type="ECO:0000269" key="7">
    <source>
    </source>
</evidence>
<evidence type="ECO:0000269" key="8">
    <source>
    </source>
</evidence>
<evidence type="ECO:0000269" key="9">
    <source>
    </source>
</evidence>
<evidence type="ECO:0000269" key="10">
    <source>
    </source>
</evidence>
<evidence type="ECO:0000269" key="11">
    <source>
    </source>
</evidence>
<evidence type="ECO:0000269" key="12">
    <source>
    </source>
</evidence>
<evidence type="ECO:0000269" key="13">
    <source>
    </source>
</evidence>
<evidence type="ECO:0000303" key="14">
    <source>
    </source>
</evidence>
<evidence type="ECO:0000303" key="15">
    <source>
    </source>
</evidence>
<evidence type="ECO:0000303" key="16">
    <source>
    </source>
</evidence>
<evidence type="ECO:0000303" key="17">
    <source ref="1"/>
</evidence>
<evidence type="ECO:0000305" key="18"/>
<evidence type="ECO:0000305" key="19">
    <source>
    </source>
</evidence>
<evidence type="ECO:0000312" key="20">
    <source>
        <dbReference type="HGNC" id="HGNC:2040"/>
    </source>
</evidence>
<dbReference type="EMBL" id="AF497644">
    <property type="protein sequence ID" value="AAQ07256.1"/>
    <property type="molecule type" value="mRNA"/>
</dbReference>
<dbReference type="EMBL" id="AK096063">
    <property type="protein sequence ID" value="BAC04691.1"/>
    <property type="molecule type" value="mRNA"/>
</dbReference>
<dbReference type="EMBL" id="AK298992">
    <property type="protein sequence ID" value="BAH12918.1"/>
    <property type="molecule type" value="mRNA"/>
</dbReference>
<dbReference type="EMBL" id="AC098484">
    <property type="status" value="NOT_ANNOTATED_CDS"/>
    <property type="molecule type" value="Genomic_DNA"/>
</dbReference>
<dbReference type="EMBL" id="CH471059">
    <property type="protein sequence ID" value="EAX07147.1"/>
    <property type="molecule type" value="Genomic_DNA"/>
</dbReference>
<dbReference type="EMBL" id="BC030524">
    <property type="protein sequence ID" value="AAH30524.1"/>
    <property type="molecule type" value="mRNA"/>
</dbReference>
<dbReference type="CCDS" id="CCDS44125.1">
    <molecule id="Q8N6F1-2"/>
</dbReference>
<dbReference type="CCDS" id="CCDS471.1">
    <molecule id="Q8N6F1-1"/>
</dbReference>
<dbReference type="CCDS" id="CCDS53306.1">
    <molecule id="Q8N6F1-3"/>
</dbReference>
<dbReference type="RefSeq" id="NP_001116867.1">
    <molecule id="Q8N6F1-2"/>
    <property type="nucleotide sequence ID" value="NM_001123395.2"/>
</dbReference>
<dbReference type="RefSeq" id="NP_001172046.1">
    <molecule id="Q8N6F1-3"/>
    <property type="nucleotide sequence ID" value="NM_001185117.2"/>
</dbReference>
<dbReference type="RefSeq" id="NP_683763.2">
    <molecule id="Q8N6F1-1"/>
    <property type="nucleotide sequence ID" value="NM_148960.3"/>
</dbReference>
<dbReference type="SMR" id="Q8N6F1"/>
<dbReference type="BioGRID" id="127213">
    <property type="interactions" value="68"/>
</dbReference>
<dbReference type="DIP" id="DIP-48953N"/>
<dbReference type="FunCoup" id="Q8N6F1">
    <property type="interactions" value="374"/>
</dbReference>
<dbReference type="IntAct" id="Q8N6F1">
    <property type="interactions" value="72"/>
</dbReference>
<dbReference type="MINT" id="Q8N6F1"/>
<dbReference type="STRING" id="9606.ENSP00000296387"/>
<dbReference type="TCDB" id="1.H.1.1.5">
    <property type="family name" value="the claudin tight junction (claudin1) family"/>
</dbReference>
<dbReference type="PhosphoSitePlus" id="Q8N6F1"/>
<dbReference type="BioMuta" id="CLDN19"/>
<dbReference type="DMDM" id="47606757"/>
<dbReference type="jPOST" id="Q8N6F1"/>
<dbReference type="MassIVE" id="Q8N6F1"/>
<dbReference type="PaxDb" id="9606-ENSP00000296387"/>
<dbReference type="PeptideAtlas" id="Q8N6F1"/>
<dbReference type="ProteomicsDB" id="26945"/>
<dbReference type="ProteomicsDB" id="72162">
    <molecule id="Q8N6F1-1"/>
</dbReference>
<dbReference type="ProteomicsDB" id="72163">
    <molecule id="Q8N6F1-2"/>
</dbReference>
<dbReference type="Antibodypedia" id="32237">
    <property type="antibodies" value="156 antibodies from 26 providers"/>
</dbReference>
<dbReference type="DNASU" id="149461"/>
<dbReference type="Ensembl" id="ENST00000296387.6">
    <molecule id="Q8N6F1-1"/>
    <property type="protein sequence ID" value="ENSP00000296387.1"/>
    <property type="gene ID" value="ENSG00000164007.11"/>
</dbReference>
<dbReference type="Ensembl" id="ENST00000372539.3">
    <molecule id="Q8N6F1-2"/>
    <property type="protein sequence ID" value="ENSP00000361617.3"/>
    <property type="gene ID" value="ENSG00000164007.11"/>
</dbReference>
<dbReference type="Ensembl" id="ENST00000539749.5">
    <molecule id="Q8N6F1-3"/>
    <property type="protein sequence ID" value="ENSP00000443229.1"/>
    <property type="gene ID" value="ENSG00000164007.11"/>
</dbReference>
<dbReference type="GeneID" id="149461"/>
<dbReference type="KEGG" id="hsa:149461"/>
<dbReference type="MANE-Select" id="ENST00000296387.6">
    <property type="protein sequence ID" value="ENSP00000296387.1"/>
    <property type="RefSeq nucleotide sequence ID" value="NM_148960.3"/>
    <property type="RefSeq protein sequence ID" value="NP_683763.2"/>
</dbReference>
<dbReference type="UCSC" id="uc001cht.1">
    <molecule id="Q8N6F1-1"/>
    <property type="organism name" value="human"/>
</dbReference>
<dbReference type="AGR" id="HGNC:2040"/>
<dbReference type="CTD" id="149461"/>
<dbReference type="DisGeNET" id="149461"/>
<dbReference type="GeneCards" id="CLDN19"/>
<dbReference type="HGNC" id="HGNC:2040">
    <property type="gene designation" value="CLDN19"/>
</dbReference>
<dbReference type="HPA" id="ENSG00000164007">
    <property type="expression patterns" value="Tissue enhanced (choroid plexus, kidney, placenta)"/>
</dbReference>
<dbReference type="MalaCards" id="CLDN19"/>
<dbReference type="MIM" id="248190">
    <property type="type" value="phenotype"/>
</dbReference>
<dbReference type="MIM" id="610036">
    <property type="type" value="gene"/>
</dbReference>
<dbReference type="neXtProt" id="NX_Q8N6F1"/>
<dbReference type="OpenTargets" id="ENSG00000164007"/>
<dbReference type="Orphanet" id="2196">
    <property type="disease" value="Primary hypomagnesemia with hypercalciuria and nephrocalcinosis with severe ocular involvement"/>
</dbReference>
<dbReference type="PharmGKB" id="PA26566"/>
<dbReference type="VEuPathDB" id="HostDB:ENSG00000164007"/>
<dbReference type="eggNOG" id="ENOG502QTG5">
    <property type="taxonomic scope" value="Eukaryota"/>
</dbReference>
<dbReference type="GeneTree" id="ENSGT00940000158624"/>
<dbReference type="HOGENOM" id="CLU_076370_2_0_1"/>
<dbReference type="InParanoid" id="Q8N6F1"/>
<dbReference type="OMA" id="KRGNQCV"/>
<dbReference type="OrthoDB" id="10025519at2759"/>
<dbReference type="PAN-GO" id="Q8N6F1">
    <property type="GO annotations" value="4 GO annotations based on evolutionary models"/>
</dbReference>
<dbReference type="PhylomeDB" id="Q8N6F1"/>
<dbReference type="TreeFam" id="TF331936"/>
<dbReference type="PathwayCommons" id="Q8N6F1"/>
<dbReference type="Reactome" id="R-HSA-420029">
    <property type="pathway name" value="Tight junction interactions"/>
</dbReference>
<dbReference type="SignaLink" id="Q8N6F1"/>
<dbReference type="BioGRID-ORCS" id="149461">
    <property type="hits" value="20 hits in 1142 CRISPR screens"/>
</dbReference>
<dbReference type="GeneWiki" id="CLDN19"/>
<dbReference type="GenomeRNAi" id="149461"/>
<dbReference type="Pharos" id="Q8N6F1">
    <property type="development level" value="Tbio"/>
</dbReference>
<dbReference type="PRO" id="PR:Q8N6F1"/>
<dbReference type="Proteomes" id="UP000005640">
    <property type="component" value="Chromosome 1"/>
</dbReference>
<dbReference type="RNAct" id="Q8N6F1">
    <property type="molecule type" value="protein"/>
</dbReference>
<dbReference type="Bgee" id="ENSG00000164007">
    <property type="expression patterns" value="Expressed in trigeminal ganglion and 117 other cell types or tissues"/>
</dbReference>
<dbReference type="GO" id="GO:0043296">
    <property type="term" value="C:apical junction complex"/>
    <property type="evidence" value="ECO:0000314"/>
    <property type="project" value="MGI"/>
</dbReference>
<dbReference type="GO" id="GO:0016323">
    <property type="term" value="C:basolateral plasma membrane"/>
    <property type="evidence" value="ECO:0000314"/>
    <property type="project" value="MGI"/>
</dbReference>
<dbReference type="GO" id="GO:0005923">
    <property type="term" value="C:bicellular tight junction"/>
    <property type="evidence" value="ECO:0000314"/>
    <property type="project" value="MGI"/>
</dbReference>
<dbReference type="GO" id="GO:0097453">
    <property type="term" value="C:mesaxon"/>
    <property type="evidence" value="ECO:0007669"/>
    <property type="project" value="Ensembl"/>
</dbReference>
<dbReference type="GO" id="GO:0005634">
    <property type="term" value="C:nucleus"/>
    <property type="evidence" value="ECO:0007669"/>
    <property type="project" value="Ensembl"/>
</dbReference>
<dbReference type="GO" id="GO:0033010">
    <property type="term" value="C:paranodal junction"/>
    <property type="evidence" value="ECO:0007669"/>
    <property type="project" value="Ensembl"/>
</dbReference>
<dbReference type="GO" id="GO:0048471">
    <property type="term" value="C:perinuclear region of cytoplasm"/>
    <property type="evidence" value="ECO:0000315"/>
    <property type="project" value="ARUK-UCL"/>
</dbReference>
<dbReference type="GO" id="GO:0005886">
    <property type="term" value="C:plasma membrane"/>
    <property type="evidence" value="ECO:0000314"/>
    <property type="project" value="HPA"/>
</dbReference>
<dbReference type="GO" id="GO:0043220">
    <property type="term" value="C:Schmidt-Lanterman incisure"/>
    <property type="evidence" value="ECO:0007669"/>
    <property type="project" value="Ensembl"/>
</dbReference>
<dbReference type="GO" id="GO:0070160">
    <property type="term" value="C:tight junction"/>
    <property type="evidence" value="ECO:0000314"/>
    <property type="project" value="UniProtKB"/>
</dbReference>
<dbReference type="GO" id="GO:0098632">
    <property type="term" value="F:cell-cell adhesion mediator activity"/>
    <property type="evidence" value="ECO:0000314"/>
    <property type="project" value="ARUK-UCL"/>
</dbReference>
<dbReference type="GO" id="GO:0042802">
    <property type="term" value="F:identical protein binding"/>
    <property type="evidence" value="ECO:0000314"/>
    <property type="project" value="UniProtKB"/>
</dbReference>
<dbReference type="GO" id="GO:0160187">
    <property type="term" value="F:paracellular tight junction channel activity"/>
    <property type="evidence" value="ECO:0000314"/>
    <property type="project" value="UniProtKB"/>
</dbReference>
<dbReference type="GO" id="GO:0005198">
    <property type="term" value="F:structural molecule activity"/>
    <property type="evidence" value="ECO:0007669"/>
    <property type="project" value="InterPro"/>
</dbReference>
<dbReference type="GO" id="GO:0030036">
    <property type="term" value="P:actin cytoskeleton organization"/>
    <property type="evidence" value="ECO:0000315"/>
    <property type="project" value="ARUK-UCL"/>
</dbReference>
<dbReference type="GO" id="GO:0070830">
    <property type="term" value="P:bicellular tight junction assembly"/>
    <property type="evidence" value="ECO:0000318"/>
    <property type="project" value="GO_Central"/>
</dbReference>
<dbReference type="GO" id="GO:0016338">
    <property type="term" value="P:calcium-independent cell-cell adhesion via plasma membrane cell-adhesion molecules"/>
    <property type="evidence" value="ECO:0000250"/>
    <property type="project" value="UniProtKB"/>
</dbReference>
<dbReference type="GO" id="GO:0007155">
    <property type="term" value="P:cell adhesion"/>
    <property type="evidence" value="ECO:0000318"/>
    <property type="project" value="GO_Central"/>
</dbReference>
<dbReference type="GO" id="GO:0034329">
    <property type="term" value="P:cell junction assembly"/>
    <property type="evidence" value="ECO:0000315"/>
    <property type="project" value="ARUK-UCL"/>
</dbReference>
<dbReference type="GO" id="GO:0030336">
    <property type="term" value="P:negative regulation of cell migration"/>
    <property type="evidence" value="ECO:0000315"/>
    <property type="project" value="ARUK-UCL"/>
</dbReference>
<dbReference type="GO" id="GO:0008285">
    <property type="term" value="P:negative regulation of cell population proliferation"/>
    <property type="evidence" value="ECO:0000315"/>
    <property type="project" value="ARUK-UCL"/>
</dbReference>
<dbReference type="GO" id="GO:0010629">
    <property type="term" value="P:negative regulation of gene expression"/>
    <property type="evidence" value="ECO:0000315"/>
    <property type="project" value="ARUK-UCL"/>
</dbReference>
<dbReference type="GO" id="GO:0019227">
    <property type="term" value="P:neuronal action potential propagation"/>
    <property type="evidence" value="ECO:0007669"/>
    <property type="project" value="Ensembl"/>
</dbReference>
<dbReference type="GO" id="GO:0160184">
    <property type="term" value="P:paracellular transport"/>
    <property type="evidence" value="ECO:0000314"/>
    <property type="project" value="UniProtKB"/>
</dbReference>
<dbReference type="GO" id="GO:0010628">
    <property type="term" value="P:positive regulation of gene expression"/>
    <property type="evidence" value="ECO:0000315"/>
    <property type="project" value="ARUK-UCL"/>
</dbReference>
<dbReference type="GO" id="GO:0150111">
    <property type="term" value="P:regulation of transepithelial transport"/>
    <property type="evidence" value="ECO:0000315"/>
    <property type="project" value="ARUK-UCL"/>
</dbReference>
<dbReference type="GO" id="GO:0070293">
    <property type="term" value="P:renal absorption"/>
    <property type="evidence" value="ECO:0000250"/>
    <property type="project" value="UniProtKB"/>
</dbReference>
<dbReference type="GO" id="GO:0003406">
    <property type="term" value="P:retinal pigment epithelium development"/>
    <property type="evidence" value="ECO:0000315"/>
    <property type="project" value="UniProtKB"/>
</dbReference>
<dbReference type="GO" id="GO:0007601">
    <property type="term" value="P:visual perception"/>
    <property type="evidence" value="ECO:0007669"/>
    <property type="project" value="UniProtKB-KW"/>
</dbReference>
<dbReference type="FunFam" id="1.20.140.150:FF:000001">
    <property type="entry name" value="Claudin"/>
    <property type="match status" value="1"/>
</dbReference>
<dbReference type="Gene3D" id="1.20.140.150">
    <property type="match status" value="1"/>
</dbReference>
<dbReference type="InterPro" id="IPR006187">
    <property type="entry name" value="Claudin"/>
</dbReference>
<dbReference type="InterPro" id="IPR017974">
    <property type="entry name" value="Claudin_CS"/>
</dbReference>
<dbReference type="InterPro" id="IPR004031">
    <property type="entry name" value="PMP22/EMP/MP20/Claudin"/>
</dbReference>
<dbReference type="PANTHER" id="PTHR12002">
    <property type="entry name" value="CLAUDIN"/>
    <property type="match status" value="1"/>
</dbReference>
<dbReference type="Pfam" id="PF00822">
    <property type="entry name" value="PMP22_Claudin"/>
    <property type="match status" value="1"/>
</dbReference>
<dbReference type="PRINTS" id="PR01077">
    <property type="entry name" value="CLAUDIN"/>
</dbReference>
<dbReference type="PROSITE" id="PS01346">
    <property type="entry name" value="CLAUDIN"/>
    <property type="match status" value="1"/>
</dbReference>
<proteinExistence type="evidence at protein level"/>
<comment type="function">
    <text evidence="3 7 8 10 11 12">Forms paracellular channels: coassembles with CLDN16 into tight junction strands with cation-selective channels through the strands, conveying epithelial permeability in a process known as paracellular tight junction permeability (PubMed:18188451, PubMed:28028216). Involved in the maintenance of ion gradients along the nephron. In the thick ascending limb (TAL) of Henle's loop, facilitates sodium paracellular permeability from the interstitial compartment to the lumen, contributing to the lumen-positive transepithelial potential that drives paracellular magnesium and calcium reabsorption (By similarity) (PubMed:17033971, PubMed:25555744). Forms paracellular barriers on its own. In the peripheral nervous system, represents a major constituent of the tight junctions in Schwann cells and contributes to electrical sealing. During retinal neurogenesis, may regulate the barrier properties of tight junctions in retinal pigment epithelium, required for proper retinal tissue differentiation and vision (By similarity) (PubMed:17033971, PubMed:30937396).</text>
</comment>
<comment type="catalytic activity">
    <reaction evidence="19">
        <text>Mg(2+)(in) = Mg(2+)(out)</text>
        <dbReference type="Rhea" id="RHEA:29827"/>
        <dbReference type="ChEBI" id="CHEBI:18420"/>
    </reaction>
</comment>
<comment type="catalytic activity">
    <reaction evidence="2 3">
        <text>Ca(2+)(in) = Ca(2+)(out)</text>
        <dbReference type="Rhea" id="RHEA:29671"/>
        <dbReference type="ChEBI" id="CHEBI:29108"/>
    </reaction>
</comment>
<comment type="catalytic activity">
    <reaction evidence="8">
        <text>Na(+)(in) = Na(+)(out)</text>
        <dbReference type="Rhea" id="RHEA:34963"/>
        <dbReference type="ChEBI" id="CHEBI:29101"/>
    </reaction>
</comment>
<comment type="catalytic activity">
    <reaction evidence="3 4">
        <text>K(+)(in) = K(+)(out)</text>
        <dbReference type="Rhea" id="RHEA:29463"/>
        <dbReference type="ChEBI" id="CHEBI:29103"/>
    </reaction>
</comment>
<comment type="catalytic activity">
    <reaction evidence="4">
        <text>Rb(+)(in) = Rb(+)(out)</text>
        <dbReference type="Rhea" id="RHEA:78547"/>
        <dbReference type="ChEBI" id="CHEBI:49847"/>
    </reaction>
</comment>
<comment type="catalytic activity">
    <reaction evidence="4">
        <text>Cs(+)(in) = Cs(+)(out)</text>
        <dbReference type="Rhea" id="RHEA:78555"/>
        <dbReference type="ChEBI" id="CHEBI:49547"/>
    </reaction>
</comment>
<comment type="catalytic activity">
    <reaction evidence="2">
        <text>Li(+)(in) = Li(+)(out)</text>
        <dbReference type="Rhea" id="RHEA:78551"/>
        <dbReference type="ChEBI" id="CHEBI:49713"/>
    </reaction>
</comment>
<comment type="subunit">
    <text evidence="1 4 8 9 11 13">Can form homo- and heteropolymeric tight junction strands. Interacts with other claudins including CLDN3, CLDN10, CLDN16 and CLDN18 with highest affinity for CLDN16 (PubMed:18188451, PubMed:19706394, PubMed:28028216, PubMed:36008380). Interacts (via PDZ-binding motif TRV) with TJP1 (via PDZ domain) (By similarity).</text>
</comment>
<comment type="interaction">
    <interactant intactId="EBI-12256978">
        <id>Q8N6F1-2</id>
    </interactant>
    <interactant intactId="EBI-13059134">
        <id>Q13520</id>
        <label>AQP6</label>
    </interactant>
    <organismsDiffer>false</organismsDiffer>
    <experiments>3</experiments>
</comment>
<comment type="interaction">
    <interactant intactId="EBI-12256978">
        <id>Q8N6F1-2</id>
    </interactant>
    <interactant intactId="EBI-17444777">
        <id>O43315</id>
        <label>AQP9</label>
    </interactant>
    <organismsDiffer>false</organismsDiffer>
    <experiments>3</experiments>
</comment>
<comment type="interaction">
    <interactant intactId="EBI-12256978">
        <id>Q8N6F1-2</id>
    </interactant>
    <interactant intactId="EBI-747430">
        <id>Q9BXK5</id>
        <label>BCL2L13</label>
    </interactant>
    <organismsDiffer>false</organismsDiffer>
    <experiments>3</experiments>
</comment>
<comment type="interaction">
    <interactant intactId="EBI-12256978">
        <id>Q8N6F1-2</id>
    </interactant>
    <interactant intactId="EBI-700794">
        <id>Q13323</id>
        <label>BIK</label>
    </interactant>
    <organismsDiffer>false</organismsDiffer>
    <experiments>3</experiments>
</comment>
<comment type="interaction">
    <interactant intactId="EBI-12256978">
        <id>Q8N6F1-2</id>
    </interactant>
    <interactant intactId="EBI-11532900">
        <id>J3KQ12</id>
        <label>BSCL2</label>
    </interactant>
    <organismsDiffer>false</organismsDiffer>
    <experiments>3</experiments>
</comment>
<comment type="interaction">
    <interactant intactId="EBI-12256978">
        <id>Q8N6F1-2</id>
    </interactant>
    <interactant intactId="EBI-17841208">
        <id>Q7KYR7-4</id>
        <label>BTN2A1</label>
    </interactant>
    <organismsDiffer>false</organismsDiffer>
    <experiments>3</experiments>
</comment>
<comment type="interaction">
    <interactant intactId="EBI-12256978">
        <id>Q8N6F1-2</id>
    </interactant>
    <interactant intactId="EBI-12824513">
        <id>Q8TD46-4</id>
        <label>CD200R1</label>
    </interactant>
    <organismsDiffer>false</organismsDiffer>
    <experiments>3</experiments>
</comment>
<comment type="interaction">
    <interactant intactId="EBI-12256978">
        <id>Q8N6F1-2</id>
    </interactant>
    <interactant intactId="EBI-6657396">
        <id>P19397</id>
        <label>CD53</label>
    </interactant>
    <organismsDiffer>false</organismsDiffer>
    <experiments>3</experiments>
</comment>
<comment type="interaction">
    <interactant intactId="EBI-12256978">
        <id>Q8N6F1-2</id>
    </interactant>
    <interactant intactId="EBI-12222807">
        <id>P04233-2</id>
        <label>CD74</label>
    </interactant>
    <organismsDiffer>false</organismsDiffer>
    <experiments>3</experiments>
</comment>
<comment type="interaction">
    <interactant intactId="EBI-12256978">
        <id>Q8N6F1-2</id>
    </interactant>
    <interactant intactId="EBI-17710733">
        <id>Q86T13</id>
        <label>CLEC14A</label>
    </interactant>
    <organismsDiffer>false</organismsDiffer>
    <experiments>3</experiments>
</comment>
<comment type="interaction">
    <interactant intactId="EBI-12256978">
        <id>Q8N6F1-2</id>
    </interactant>
    <interactant intactId="EBI-11749983">
        <id>Q9UHP7-3</id>
        <label>CLEC2D</label>
    </interactant>
    <organismsDiffer>false</organismsDiffer>
    <experiments>3</experiments>
</comment>
<comment type="interaction">
    <interactant intactId="EBI-12256978">
        <id>Q8N6F1-2</id>
    </interactant>
    <interactant intactId="EBI-17274839">
        <id>P58418</id>
        <label>CLRN1</label>
    </interactant>
    <organismsDiffer>false</organismsDiffer>
    <experiments>3</experiments>
</comment>
<comment type="interaction">
    <interactant intactId="EBI-12256978">
        <id>Q8N6F1-2</id>
    </interactant>
    <interactant intactId="EBI-625022">
        <id>O43889-2</id>
        <label>CREB3</label>
    </interactant>
    <organismsDiffer>false</organismsDiffer>
    <experiments>3</experiments>
</comment>
<comment type="interaction">
    <interactant intactId="EBI-12256978">
        <id>Q8N6F1-2</id>
    </interactant>
    <interactant intactId="EBI-12836456">
        <id>P49682</id>
        <label>CXCR3</label>
    </interactant>
    <organismsDiffer>false</organismsDiffer>
    <experiments>3</experiments>
</comment>
<comment type="interaction">
    <interactant intactId="EBI-12256978">
        <id>Q8N6F1-2</id>
    </interactant>
    <interactant intactId="EBI-3867333">
        <id>A8MQ03</id>
        <label>CYSRT1</label>
    </interactant>
    <organismsDiffer>false</organismsDiffer>
    <experiments>3</experiments>
</comment>
<comment type="interaction">
    <interactant intactId="EBI-12256978">
        <id>Q8N6F1-2</id>
    </interactant>
    <interactant intactId="EBI-781551">
        <id>Q9Y282</id>
        <label>ERGIC3</label>
    </interactant>
    <organismsDiffer>false</organismsDiffer>
    <experiments>3</experiments>
</comment>
<comment type="interaction">
    <interactant intactId="EBI-12256978">
        <id>Q8N6F1-2</id>
    </interactant>
    <interactant intactId="EBI-18304435">
        <id>Q5JX71</id>
        <label>FAM209A</label>
    </interactant>
    <organismsDiffer>false</organismsDiffer>
    <experiments>3</experiments>
</comment>
<comment type="interaction">
    <interactant intactId="EBI-12256978">
        <id>Q8N6F1-2</id>
    </interactant>
    <interactant intactId="EBI-2869867">
        <id>P12314</id>
        <label>FCGR1A</label>
    </interactant>
    <organismsDiffer>false</organismsDiffer>
    <experiments>3</experiments>
</comment>
<comment type="interaction">
    <interactant intactId="EBI-12256978">
        <id>Q8N6F1-2</id>
    </interactant>
    <interactant intactId="EBI-2833934">
        <id>P55899</id>
        <label>FCGRT</label>
    </interactant>
    <organismsDiffer>false</organismsDiffer>
    <experiments>3</experiments>
</comment>
<comment type="interaction">
    <interactant intactId="EBI-12256978">
        <id>Q8N6F1-2</id>
    </interactant>
    <interactant intactId="EBI-3918971">
        <id>Q9Y680</id>
        <label>FKBP7</label>
    </interactant>
    <organismsDiffer>false</organismsDiffer>
    <experiments>3</experiments>
</comment>
<comment type="interaction">
    <interactant intactId="EBI-12256978">
        <id>Q8N6F1-2</id>
    </interactant>
    <interactant intactId="EBI-12142257">
        <id>Q8TBE3</id>
        <label>FNDC9</label>
    </interactant>
    <organismsDiffer>false</organismsDiffer>
    <experiments>3</experiments>
</comment>
<comment type="interaction">
    <interactant intactId="EBI-12256978">
        <id>Q8N6F1-2</id>
    </interactant>
    <interactant intactId="EBI-1058791">
        <id>Q9UJ14</id>
        <label>GGT7</label>
    </interactant>
    <organismsDiffer>false</organismsDiffer>
    <experiments>3</experiments>
</comment>
<comment type="interaction">
    <interactant intactId="EBI-12256978">
        <id>Q8N6F1-2</id>
    </interactant>
    <interactant intactId="EBI-17458373">
        <id>P48165</id>
        <label>GJA8</label>
    </interactant>
    <organismsDiffer>false</organismsDiffer>
    <experiments>3</experiments>
</comment>
<comment type="interaction">
    <interactant intactId="EBI-12256978">
        <id>Q8N6F1-2</id>
    </interactant>
    <interactant intactId="EBI-3917143">
        <id>Q5T7V8</id>
        <label>GORAB</label>
    </interactant>
    <organismsDiffer>false</organismsDiffer>
    <experiments>3</experiments>
</comment>
<comment type="interaction">
    <interactant intactId="EBI-12256978">
        <id>Q8N6F1-2</id>
    </interactant>
    <interactant intactId="EBI-6255622">
        <id>Q8N6U8</id>
        <label>GPR161</label>
    </interactant>
    <organismsDiffer>false</organismsDiffer>
    <experiments>3</experiments>
</comment>
<comment type="interaction">
    <interactant intactId="EBI-12256978">
        <id>Q8N6F1-2</id>
    </interactant>
    <interactant intactId="EBI-11721746">
        <id>Q8TED1</id>
        <label>GPX8</label>
    </interactant>
    <organismsDiffer>false</organismsDiffer>
    <experiments>3</experiments>
</comment>
<comment type="interaction">
    <interactant intactId="EBI-12256978">
        <id>Q8N6F1-2</id>
    </interactant>
    <interactant intactId="EBI-18053395">
        <id>Q7Z5P4</id>
        <label>HSD17B13</label>
    </interactant>
    <organismsDiffer>false</organismsDiffer>
    <experiments>3</experiments>
</comment>
<comment type="interaction">
    <interactant intactId="EBI-12256978">
        <id>Q8N6F1-2</id>
    </interactant>
    <interactant intactId="EBI-725421">
        <id>P32942</id>
        <label>ICAM3</label>
    </interactant>
    <organismsDiffer>false</organismsDiffer>
    <experiments>3</experiments>
</comment>
<comment type="interaction">
    <interactant intactId="EBI-12256978">
        <id>Q8N6F1-2</id>
    </interactant>
    <interactant intactId="EBI-3905457">
        <id>P38484</id>
        <label>IFNGR2</label>
    </interactant>
    <organismsDiffer>false</organismsDiffer>
    <experiments>3</experiments>
</comment>
<comment type="interaction">
    <interactant intactId="EBI-12256978">
        <id>Q8N6F1-2</id>
    </interactant>
    <interactant intactId="EBI-1757512">
        <id>P26951</id>
        <label>IL3RA</label>
    </interactant>
    <organismsDiffer>false</organismsDiffer>
    <experiments>3</experiments>
</comment>
<comment type="interaction">
    <interactant intactId="EBI-12256978">
        <id>Q8N6F1-2</id>
    </interactant>
    <interactant intactId="EBI-746662">
        <id>P23276</id>
        <label>KEL</label>
    </interactant>
    <organismsDiffer>false</organismsDiffer>
    <experiments>3</experiments>
</comment>
<comment type="interaction">
    <interactant intactId="EBI-12256978">
        <id>Q8N6F1-2</id>
    </interactant>
    <interactant intactId="EBI-8632435">
        <id>P43628</id>
        <label>KIR2DL3</label>
    </interactant>
    <organismsDiffer>false</organismsDiffer>
    <experiments>3</experiments>
</comment>
<comment type="interaction">
    <interactant intactId="EBI-12256978">
        <id>Q8N6F1-2</id>
    </interactant>
    <interactant intactId="EBI-948001">
        <id>Q15323</id>
        <label>KRT31</label>
    </interactant>
    <organismsDiffer>false</organismsDiffer>
    <experiments>3</experiments>
</comment>
<comment type="interaction">
    <interactant intactId="EBI-12256978">
        <id>Q8N6F1-2</id>
    </interactant>
    <interactant intactId="EBI-1047093">
        <id>O76011</id>
        <label>KRT34</label>
    </interactant>
    <organismsDiffer>false</organismsDiffer>
    <experiments>3</experiments>
</comment>
<comment type="interaction">
    <interactant intactId="EBI-12256978">
        <id>Q8N6F1-2</id>
    </interactant>
    <interactant intactId="EBI-2865663">
        <id>Q13571</id>
        <label>LAPTM5</label>
    </interactant>
    <organismsDiffer>false</organismsDiffer>
    <experiments>3</experiments>
</comment>
<comment type="interaction">
    <interactant intactId="EBI-12256978">
        <id>Q8N6F1-2</id>
    </interactant>
    <interactant intactId="EBI-11304917">
        <id>Q8N386</id>
        <label>LRRC25</label>
    </interactant>
    <organismsDiffer>false</organismsDiffer>
    <experiments>3</experiments>
</comment>
<comment type="interaction">
    <interactant intactId="EBI-12256978">
        <id>Q8N6F1-2</id>
    </interactant>
    <interactant intactId="EBI-3925442">
        <id>Q9HCJ2</id>
        <label>LRRC4C</label>
    </interactant>
    <organismsDiffer>false</organismsDiffer>
    <experiments>3</experiments>
</comment>
<comment type="interaction">
    <interactant intactId="EBI-12256978">
        <id>Q8N6F1-2</id>
    </interactant>
    <interactant intactId="EBI-11956541">
        <id>Q9GZY8-5</id>
        <label>MFF</label>
    </interactant>
    <organismsDiffer>false</organismsDiffer>
    <experiments>3</experiments>
</comment>
<comment type="interaction">
    <interactant intactId="EBI-12256978">
        <id>Q8N6F1-2</id>
    </interactant>
    <interactant intactId="EBI-12839612">
        <id>Q96JA4</id>
        <label>MS4A14</label>
    </interactant>
    <organismsDiffer>false</organismsDiffer>
    <experiments>3</experiments>
</comment>
<comment type="interaction">
    <interactant intactId="EBI-12256978">
        <id>Q8N6F1-2</id>
    </interactant>
    <interactant intactId="EBI-12820341">
        <id>Q96JQ5</id>
        <label>MS4A4A</label>
    </interactant>
    <organismsDiffer>false</organismsDiffer>
    <experiments>3</experiments>
</comment>
<comment type="interaction">
    <interactant intactId="EBI-12256978">
        <id>Q8N6F1-2</id>
    </interactant>
    <interactant intactId="EBI-17263240">
        <id>P15941-11</id>
        <label>MUC1</label>
    </interactant>
    <organismsDiffer>false</organismsDiffer>
    <experiments>3</experiments>
</comment>
<comment type="interaction">
    <interactant intactId="EBI-12256978">
        <id>Q8N6F1-2</id>
    </interactant>
    <interactant intactId="EBI-716063">
        <id>Q13113</id>
        <label>PDZK1IP1</label>
    </interactant>
    <organismsDiffer>false</organismsDiffer>
    <experiments>3</experiments>
</comment>
<comment type="interaction">
    <interactant intactId="EBI-12256978">
        <id>Q8N6F1-2</id>
    </interactant>
    <interactant intactId="EBI-7956847">
        <id>Q9P0L9</id>
        <label>PKD2L1</label>
    </interactant>
    <organismsDiffer>false</organismsDiffer>
    <experiments>3</experiments>
</comment>
<comment type="interaction">
    <interactant intactId="EBI-12256978">
        <id>Q8N6F1-2</id>
    </interactant>
    <interactant intactId="EBI-373552">
        <id>Q96CS7</id>
        <label>PLEKHB2</label>
    </interactant>
    <organismsDiffer>false</organismsDiffer>
    <experiments>3</experiments>
</comment>
<comment type="interaction">
    <interactant intactId="EBI-12256978">
        <id>Q8N6F1-2</id>
    </interactant>
    <interactant intactId="EBI-3919694">
        <id>P15151</id>
        <label>PVR</label>
    </interactant>
    <organismsDiffer>false</organismsDiffer>
    <experiments>3</experiments>
</comment>
<comment type="interaction">
    <interactant intactId="EBI-12256978">
        <id>Q8N6F1-2</id>
    </interactant>
    <interactant intactId="EBI-3920694">
        <id>Q9NR31</id>
        <label>SAR1A</label>
    </interactant>
    <organismsDiffer>false</organismsDiffer>
    <experiments>3</experiments>
</comment>
<comment type="interaction">
    <interactant intactId="EBI-12256978">
        <id>Q8N6F1-2</id>
    </interactant>
    <interactant intactId="EBI-1564650">
        <id>Q14108</id>
        <label>SCARB2</label>
    </interactant>
    <organismsDiffer>false</organismsDiffer>
    <experiments>3</experiments>
</comment>
<comment type="interaction">
    <interactant intactId="EBI-12256978">
        <id>Q8N6F1-2</id>
    </interactant>
    <interactant intactId="EBI-1046170">
        <id>O95470</id>
        <label>SGPL1</label>
    </interactant>
    <organismsDiffer>false</organismsDiffer>
    <experiments>3</experiments>
</comment>
<comment type="interaction">
    <interactant intactId="EBI-12256978">
        <id>Q8N6F1-2</id>
    </interactant>
    <interactant intactId="EBI-14058448">
        <id>Q96DU3</id>
        <label>SLAMF6</label>
    </interactant>
    <organismsDiffer>false</organismsDiffer>
    <experiments>3</experiments>
</comment>
<comment type="interaction">
    <interactant intactId="EBI-12256978">
        <id>Q8N6F1-2</id>
    </interactant>
    <interactant intactId="EBI-3923031">
        <id>Q14973</id>
        <label>SLC10A1</label>
    </interactant>
    <organismsDiffer>false</organismsDiffer>
    <experiments>3</experiments>
</comment>
<comment type="interaction">
    <interactant intactId="EBI-12256978">
        <id>Q8N6F1-2</id>
    </interactant>
    <interactant intactId="EBI-17295964">
        <id>Q9NQQ7-3</id>
        <label>SLC35C2</label>
    </interactant>
    <organismsDiffer>false</organismsDiffer>
    <experiments>3</experiments>
</comment>
<comment type="interaction">
    <interactant intactId="EBI-12256978">
        <id>Q8N6F1-2</id>
    </interactant>
    <interactant intactId="EBI-17498703">
        <id>Q9HBV2</id>
        <label>SPACA1</label>
    </interactant>
    <organismsDiffer>false</organismsDiffer>
    <experiments>3</experiments>
</comment>
<comment type="interaction">
    <interactant intactId="EBI-12256978">
        <id>Q8N6F1-2</id>
    </interactant>
    <interactant intactId="EBI-1211440">
        <id>P27105</id>
        <label>STOM</label>
    </interactant>
    <organismsDiffer>false</organismsDiffer>
    <experiments>3</experiments>
</comment>
<comment type="interaction">
    <interactant intactId="EBI-12256978">
        <id>Q8N6F1-2</id>
    </interactant>
    <interactant intactId="EBI-12900395">
        <id>Q8TAV4</id>
        <label>STOML3</label>
    </interactant>
    <organismsDiffer>false</organismsDiffer>
    <experiments>3</experiments>
</comment>
<comment type="interaction">
    <interactant intactId="EBI-12256978">
        <id>Q8N6F1-2</id>
    </interactant>
    <interactant intactId="EBI-18194029">
        <id>Q96L08</id>
        <label>SUSD3</label>
    </interactant>
    <organismsDiffer>false</organismsDiffer>
    <experiments>3</experiments>
</comment>
<comment type="interaction">
    <interactant intactId="EBI-12256978">
        <id>Q8N6F1-2</id>
    </interactant>
    <interactant intactId="EBI-12099160">
        <id>Q8N205-2</id>
        <label>SYNE4</label>
    </interactant>
    <organismsDiffer>false</organismsDiffer>
    <experiments>3</experiments>
</comment>
<comment type="interaction">
    <interactant intactId="EBI-12256978">
        <id>Q8N6F1-2</id>
    </interactant>
    <interactant intactId="EBI-13351685">
        <id>Q96CE8</id>
        <label>TM4SF18</label>
    </interactant>
    <organismsDiffer>false</organismsDiffer>
    <experiments>3</experiments>
</comment>
<comment type="interaction">
    <interactant intactId="EBI-12256978">
        <id>Q8N6F1-2</id>
    </interactant>
    <interactant intactId="EBI-2821497">
        <id>Q9BVX2</id>
        <label>TMEM106C</label>
    </interactant>
    <organismsDiffer>false</organismsDiffer>
    <experiments>3</experiments>
</comment>
<comment type="interaction">
    <interactant intactId="EBI-12256978">
        <id>Q8N6F1-2</id>
    </interactant>
    <interactant intactId="EBI-10314986">
        <id>Q9NWD8</id>
        <label>TMEM248</label>
    </interactant>
    <organismsDiffer>false</organismsDiffer>
    <experiments>3</experiments>
</comment>
<comment type="interaction">
    <interactant intactId="EBI-12256978">
        <id>Q8N6F1-2</id>
    </interactant>
    <interactant intactId="EBI-18178701">
        <id>Q4KMG9</id>
        <label>TMEM52B</label>
    </interactant>
    <organismsDiffer>false</organismsDiffer>
    <experiments>3</experiments>
</comment>
<comment type="interaction">
    <interactant intactId="EBI-12256978">
        <id>Q8N6F1-2</id>
    </interactant>
    <interactant intactId="EBI-11742770">
        <id>Q96HE8</id>
        <label>TMEM80</label>
    </interactant>
    <organismsDiffer>false</organismsDiffer>
    <experiments>3</experiments>
</comment>
<comment type="interaction">
    <interactant intactId="EBI-12256978">
        <id>Q8N6F1-2</id>
    </interactant>
    <interactant intactId="EBI-524131">
        <id>O43557</id>
        <label>TNFSF14</label>
    </interactant>
    <organismsDiffer>false</organismsDiffer>
    <experiments>3</experiments>
</comment>
<comment type="interaction">
    <interactant intactId="EBI-12256978">
        <id>Q8N6F1-2</id>
    </interactant>
    <interactant intactId="EBI-15799971">
        <id>Q9Z0S6</id>
        <label>Cldn10</label>
    </interactant>
    <organismsDiffer>true</organismsDiffer>
    <experiments>2</experiments>
</comment>
<comment type="subcellular location">
    <subcellularLocation>
        <location evidence="8 11">Cell junction</location>
        <location evidence="8 11">Tight junction</location>
    </subcellularLocation>
    <subcellularLocation>
        <location evidence="8 11">Cell membrane</location>
        <topology evidence="5">Multi-pass membrane protein</topology>
    </subcellularLocation>
    <text evidence="8">Cotrafficks with CLDN16 from ER to tight junctions. Colocalizes with CLDN16 and CLDN3 in cell-cell contact areas of the TAL spatially separated from CLDN10b paracellular channels.</text>
</comment>
<comment type="alternative products">
    <event type="alternative splicing"/>
    <isoform>
        <id>Q8N6F1-1</id>
        <name>1</name>
        <sequence type="displayed"/>
    </isoform>
    <isoform>
        <id>Q8N6F1-2</id>
        <name>2</name>
        <sequence type="described" ref="VSP_010342"/>
    </isoform>
    <isoform>
        <id>Q8N6F1-3</id>
        <name>3</name>
        <sequence type="described" ref="VSP_044839"/>
    </isoform>
</comment>
<comment type="disease" evidence="7 8 9 10 12">
    <disease id="DI-00575">
        <name>Hypomagnesemia 5, renal, with or without ocular involvement</name>
        <acronym>HOMG5</acronym>
        <description>A progressive renal disease characterized by primary renal magnesium wasting with hypomagnesemia, hypercalciuria and nephrocalcinosis associated with severe ocular abnormalities such as bilateral chorioretinal scars, macular colobomata, significant myopia and nystagmus. The renal phenotype is virtually undistinguishable from that of patients with HOMG3.</description>
        <dbReference type="MIM" id="248190"/>
    </disease>
    <text>The disease is caused by variants affecting the gene represented in this entry.</text>
</comment>
<comment type="similarity">
    <text evidence="18">Belongs to the claudin family.</text>
</comment>
<reference key="1">
    <citation type="submission" date="2002-04" db="EMBL/GenBank/DDBJ databases">
        <title>Human claudin-19.</title>
        <authorList>
            <person name="Morita K."/>
        </authorList>
    </citation>
    <scope>NUCLEOTIDE SEQUENCE [MRNA] (ISOFORM 2)</scope>
</reference>
<reference key="2">
    <citation type="journal article" date="2004" name="Nat. Genet.">
        <title>Complete sequencing and characterization of 21,243 full-length human cDNAs.</title>
        <authorList>
            <person name="Ota T."/>
            <person name="Suzuki Y."/>
            <person name="Nishikawa T."/>
            <person name="Otsuki T."/>
            <person name="Sugiyama T."/>
            <person name="Irie R."/>
            <person name="Wakamatsu A."/>
            <person name="Hayashi K."/>
            <person name="Sato H."/>
            <person name="Nagai K."/>
            <person name="Kimura K."/>
            <person name="Makita H."/>
            <person name="Sekine M."/>
            <person name="Obayashi M."/>
            <person name="Nishi T."/>
            <person name="Shibahara T."/>
            <person name="Tanaka T."/>
            <person name="Ishii S."/>
            <person name="Yamamoto J."/>
            <person name="Saito K."/>
            <person name="Kawai Y."/>
            <person name="Isono Y."/>
            <person name="Nakamura Y."/>
            <person name="Nagahari K."/>
            <person name="Murakami K."/>
            <person name="Yasuda T."/>
            <person name="Iwayanagi T."/>
            <person name="Wagatsuma M."/>
            <person name="Shiratori A."/>
            <person name="Sudo H."/>
            <person name="Hosoiri T."/>
            <person name="Kaku Y."/>
            <person name="Kodaira H."/>
            <person name="Kondo H."/>
            <person name="Sugawara M."/>
            <person name="Takahashi M."/>
            <person name="Kanda K."/>
            <person name="Yokoi T."/>
            <person name="Furuya T."/>
            <person name="Kikkawa E."/>
            <person name="Omura Y."/>
            <person name="Abe K."/>
            <person name="Kamihara K."/>
            <person name="Katsuta N."/>
            <person name="Sato K."/>
            <person name="Tanikawa M."/>
            <person name="Yamazaki M."/>
            <person name="Ninomiya K."/>
            <person name="Ishibashi T."/>
            <person name="Yamashita H."/>
            <person name="Murakawa K."/>
            <person name="Fujimori K."/>
            <person name="Tanai H."/>
            <person name="Kimata M."/>
            <person name="Watanabe M."/>
            <person name="Hiraoka S."/>
            <person name="Chiba Y."/>
            <person name="Ishida S."/>
            <person name="Ono Y."/>
            <person name="Takiguchi S."/>
            <person name="Watanabe S."/>
            <person name="Yosida M."/>
            <person name="Hotuta T."/>
            <person name="Kusano J."/>
            <person name="Kanehori K."/>
            <person name="Takahashi-Fujii A."/>
            <person name="Hara H."/>
            <person name="Tanase T.-O."/>
            <person name="Nomura Y."/>
            <person name="Togiya S."/>
            <person name="Komai F."/>
            <person name="Hara R."/>
            <person name="Takeuchi K."/>
            <person name="Arita M."/>
            <person name="Imose N."/>
            <person name="Musashino K."/>
            <person name="Yuuki H."/>
            <person name="Oshima A."/>
            <person name="Sasaki N."/>
            <person name="Aotsuka S."/>
            <person name="Yoshikawa Y."/>
            <person name="Matsunawa H."/>
            <person name="Ichihara T."/>
            <person name="Shiohata N."/>
            <person name="Sano S."/>
            <person name="Moriya S."/>
            <person name="Momiyama H."/>
            <person name="Satoh N."/>
            <person name="Takami S."/>
            <person name="Terashima Y."/>
            <person name="Suzuki O."/>
            <person name="Nakagawa S."/>
            <person name="Senoh A."/>
            <person name="Mizoguchi H."/>
            <person name="Goto Y."/>
            <person name="Shimizu F."/>
            <person name="Wakebe H."/>
            <person name="Hishigaki H."/>
            <person name="Watanabe T."/>
            <person name="Sugiyama A."/>
            <person name="Takemoto M."/>
            <person name="Kawakami B."/>
            <person name="Yamazaki M."/>
            <person name="Watanabe K."/>
            <person name="Kumagai A."/>
            <person name="Itakura S."/>
            <person name="Fukuzumi Y."/>
            <person name="Fujimori Y."/>
            <person name="Komiyama M."/>
            <person name="Tashiro H."/>
            <person name="Tanigami A."/>
            <person name="Fujiwara T."/>
            <person name="Ono T."/>
            <person name="Yamada K."/>
            <person name="Fujii Y."/>
            <person name="Ozaki K."/>
            <person name="Hirao M."/>
            <person name="Ohmori Y."/>
            <person name="Kawabata A."/>
            <person name="Hikiji T."/>
            <person name="Kobatake N."/>
            <person name="Inagaki H."/>
            <person name="Ikema Y."/>
            <person name="Okamoto S."/>
            <person name="Okitani R."/>
            <person name="Kawakami T."/>
            <person name="Noguchi S."/>
            <person name="Itoh T."/>
            <person name="Shigeta K."/>
            <person name="Senba T."/>
            <person name="Matsumura K."/>
            <person name="Nakajima Y."/>
            <person name="Mizuno T."/>
            <person name="Morinaga M."/>
            <person name="Sasaki M."/>
            <person name="Togashi T."/>
            <person name="Oyama M."/>
            <person name="Hata H."/>
            <person name="Watanabe M."/>
            <person name="Komatsu T."/>
            <person name="Mizushima-Sugano J."/>
            <person name="Satoh T."/>
            <person name="Shirai Y."/>
            <person name="Takahashi Y."/>
            <person name="Nakagawa K."/>
            <person name="Okumura K."/>
            <person name="Nagase T."/>
            <person name="Nomura N."/>
            <person name="Kikuchi H."/>
            <person name="Masuho Y."/>
            <person name="Yamashita R."/>
            <person name="Nakai K."/>
            <person name="Yada T."/>
            <person name="Nakamura Y."/>
            <person name="Ohara O."/>
            <person name="Isogai T."/>
            <person name="Sugano S."/>
        </authorList>
    </citation>
    <scope>NUCLEOTIDE SEQUENCE [LARGE SCALE MRNA] (ISOFORMS 2 AND 3)</scope>
    <source>
        <tissue>Kidney</tissue>
    </source>
</reference>
<reference key="3">
    <citation type="journal article" date="2006" name="Nature">
        <title>The DNA sequence and biological annotation of human chromosome 1.</title>
        <authorList>
            <person name="Gregory S.G."/>
            <person name="Barlow K.F."/>
            <person name="McLay K.E."/>
            <person name="Kaul R."/>
            <person name="Swarbreck D."/>
            <person name="Dunham A."/>
            <person name="Scott C.E."/>
            <person name="Howe K.L."/>
            <person name="Woodfine K."/>
            <person name="Spencer C.C.A."/>
            <person name="Jones M.C."/>
            <person name="Gillson C."/>
            <person name="Searle S."/>
            <person name="Zhou Y."/>
            <person name="Kokocinski F."/>
            <person name="McDonald L."/>
            <person name="Evans R."/>
            <person name="Phillips K."/>
            <person name="Atkinson A."/>
            <person name="Cooper R."/>
            <person name="Jones C."/>
            <person name="Hall R.E."/>
            <person name="Andrews T.D."/>
            <person name="Lloyd C."/>
            <person name="Ainscough R."/>
            <person name="Almeida J.P."/>
            <person name="Ambrose K.D."/>
            <person name="Anderson F."/>
            <person name="Andrew R.W."/>
            <person name="Ashwell R.I.S."/>
            <person name="Aubin K."/>
            <person name="Babbage A.K."/>
            <person name="Bagguley C.L."/>
            <person name="Bailey J."/>
            <person name="Beasley H."/>
            <person name="Bethel G."/>
            <person name="Bird C.P."/>
            <person name="Bray-Allen S."/>
            <person name="Brown J.Y."/>
            <person name="Brown A.J."/>
            <person name="Buckley D."/>
            <person name="Burton J."/>
            <person name="Bye J."/>
            <person name="Carder C."/>
            <person name="Chapman J.C."/>
            <person name="Clark S.Y."/>
            <person name="Clarke G."/>
            <person name="Clee C."/>
            <person name="Cobley V."/>
            <person name="Collier R.E."/>
            <person name="Corby N."/>
            <person name="Coville G.J."/>
            <person name="Davies J."/>
            <person name="Deadman R."/>
            <person name="Dunn M."/>
            <person name="Earthrowl M."/>
            <person name="Ellington A.G."/>
            <person name="Errington H."/>
            <person name="Frankish A."/>
            <person name="Frankland J."/>
            <person name="French L."/>
            <person name="Garner P."/>
            <person name="Garnett J."/>
            <person name="Gay L."/>
            <person name="Ghori M.R.J."/>
            <person name="Gibson R."/>
            <person name="Gilby L.M."/>
            <person name="Gillett W."/>
            <person name="Glithero R.J."/>
            <person name="Grafham D.V."/>
            <person name="Griffiths C."/>
            <person name="Griffiths-Jones S."/>
            <person name="Grocock R."/>
            <person name="Hammond S."/>
            <person name="Harrison E.S.I."/>
            <person name="Hart E."/>
            <person name="Haugen E."/>
            <person name="Heath P.D."/>
            <person name="Holmes S."/>
            <person name="Holt K."/>
            <person name="Howden P.J."/>
            <person name="Hunt A.R."/>
            <person name="Hunt S.E."/>
            <person name="Hunter G."/>
            <person name="Isherwood J."/>
            <person name="James R."/>
            <person name="Johnson C."/>
            <person name="Johnson D."/>
            <person name="Joy A."/>
            <person name="Kay M."/>
            <person name="Kershaw J.K."/>
            <person name="Kibukawa M."/>
            <person name="Kimberley A.M."/>
            <person name="King A."/>
            <person name="Knights A.J."/>
            <person name="Lad H."/>
            <person name="Laird G."/>
            <person name="Lawlor S."/>
            <person name="Leongamornlert D.A."/>
            <person name="Lloyd D.M."/>
            <person name="Loveland J."/>
            <person name="Lovell J."/>
            <person name="Lush M.J."/>
            <person name="Lyne R."/>
            <person name="Martin S."/>
            <person name="Mashreghi-Mohammadi M."/>
            <person name="Matthews L."/>
            <person name="Matthews N.S.W."/>
            <person name="McLaren S."/>
            <person name="Milne S."/>
            <person name="Mistry S."/>
            <person name="Moore M.J.F."/>
            <person name="Nickerson T."/>
            <person name="O'Dell C.N."/>
            <person name="Oliver K."/>
            <person name="Palmeiri A."/>
            <person name="Palmer S.A."/>
            <person name="Parker A."/>
            <person name="Patel D."/>
            <person name="Pearce A.V."/>
            <person name="Peck A.I."/>
            <person name="Pelan S."/>
            <person name="Phelps K."/>
            <person name="Phillimore B.J."/>
            <person name="Plumb R."/>
            <person name="Rajan J."/>
            <person name="Raymond C."/>
            <person name="Rouse G."/>
            <person name="Saenphimmachak C."/>
            <person name="Sehra H.K."/>
            <person name="Sheridan E."/>
            <person name="Shownkeen R."/>
            <person name="Sims S."/>
            <person name="Skuce C.D."/>
            <person name="Smith M."/>
            <person name="Steward C."/>
            <person name="Subramanian S."/>
            <person name="Sycamore N."/>
            <person name="Tracey A."/>
            <person name="Tromans A."/>
            <person name="Van Helmond Z."/>
            <person name="Wall M."/>
            <person name="Wallis J.M."/>
            <person name="White S."/>
            <person name="Whitehead S.L."/>
            <person name="Wilkinson J.E."/>
            <person name="Willey D.L."/>
            <person name="Williams H."/>
            <person name="Wilming L."/>
            <person name="Wray P.W."/>
            <person name="Wu Z."/>
            <person name="Coulson A."/>
            <person name="Vaudin M."/>
            <person name="Sulston J.E."/>
            <person name="Durbin R.M."/>
            <person name="Hubbard T."/>
            <person name="Wooster R."/>
            <person name="Dunham I."/>
            <person name="Carter N.P."/>
            <person name="McVean G."/>
            <person name="Ross M.T."/>
            <person name="Harrow J."/>
            <person name="Olson M.V."/>
            <person name="Beck S."/>
            <person name="Rogers J."/>
            <person name="Bentley D.R."/>
        </authorList>
    </citation>
    <scope>NUCLEOTIDE SEQUENCE [LARGE SCALE GENOMIC DNA]</scope>
</reference>
<reference key="4">
    <citation type="submission" date="2005-09" db="EMBL/GenBank/DDBJ databases">
        <authorList>
            <person name="Mural R.J."/>
            <person name="Istrail S."/>
            <person name="Sutton G.G."/>
            <person name="Florea L."/>
            <person name="Halpern A.L."/>
            <person name="Mobarry C.M."/>
            <person name="Lippert R."/>
            <person name="Walenz B."/>
            <person name="Shatkay H."/>
            <person name="Dew I."/>
            <person name="Miller J.R."/>
            <person name="Flanigan M.J."/>
            <person name="Edwards N.J."/>
            <person name="Bolanos R."/>
            <person name="Fasulo D."/>
            <person name="Halldorsson B.V."/>
            <person name="Hannenhalli S."/>
            <person name="Turner R."/>
            <person name="Yooseph S."/>
            <person name="Lu F."/>
            <person name="Nusskern D.R."/>
            <person name="Shue B.C."/>
            <person name="Zheng X.H."/>
            <person name="Zhong F."/>
            <person name="Delcher A.L."/>
            <person name="Huson D.H."/>
            <person name="Kravitz S.A."/>
            <person name="Mouchard L."/>
            <person name="Reinert K."/>
            <person name="Remington K.A."/>
            <person name="Clark A.G."/>
            <person name="Waterman M.S."/>
            <person name="Eichler E.E."/>
            <person name="Adams M.D."/>
            <person name="Hunkapiller M.W."/>
            <person name="Myers E.W."/>
            <person name="Venter J.C."/>
        </authorList>
    </citation>
    <scope>NUCLEOTIDE SEQUENCE [LARGE SCALE GENOMIC DNA]</scope>
</reference>
<reference key="5">
    <citation type="journal article" date="2004" name="Genome Res.">
        <title>The status, quality, and expansion of the NIH full-length cDNA project: the Mammalian Gene Collection (MGC).</title>
        <authorList>
            <consortium name="The MGC Project Team"/>
        </authorList>
    </citation>
    <scope>NUCLEOTIDE SEQUENCE [LARGE SCALE MRNA] (ISOFORM 1)</scope>
    <source>
        <tissue>Lung</tissue>
        <tissue>Spleen</tissue>
    </source>
</reference>
<reference key="6">
    <citation type="journal article" date="2008" name="J. Clin. Invest.">
        <title>Claudin-16 and claudin-19 interact and form a cation-selective tight junction complex.</title>
        <authorList>
            <person name="Hou J."/>
            <person name="Renigunta A."/>
            <person name="Konrad M."/>
            <person name="Gomes A.S."/>
            <person name="Schneeberger E.E."/>
            <person name="Paul D.L."/>
            <person name="Waldegger S."/>
            <person name="Goodenough D.A."/>
        </authorList>
    </citation>
    <scope>FUNCTION</scope>
    <scope>TRANSPORTER ACTIVITY</scope>
    <scope>SUBUNIT</scope>
    <scope>SUBCELLULAR LOCATION</scope>
    <scope>INTERACTION WITH CLDN16</scope>
    <scope>VARIANTS HOMG5 ASP-20; GLU-57; PRO-90 AND ARG-123</scope>
</reference>
<reference key="7">
    <citation type="journal article" date="2009" name="Proc. Natl. Acad. Sci. U.S.A.">
        <title>Claudin-16 and claudin-19 interaction is required for their assembly into tight junctions and for renal reabsorption of magnesium.</title>
        <authorList>
            <person name="Hou J."/>
            <person name="Renigunta A."/>
            <person name="Gomes A.S."/>
            <person name="Hou M."/>
            <person name="Paul D.L."/>
            <person name="Waldegger S."/>
            <person name="Goodenough D.A."/>
        </authorList>
    </citation>
    <scope>INTERACTION WITH CLDN10; CLDN16 AND CLDN18</scope>
    <scope>CHARACTERIZATION OF VARIANTS HOMG5 ASP-20; GLU-57; PRO-90 AND ARG-123</scope>
</reference>
<reference key="8">
    <citation type="journal article" date="2017" name="Proc. Natl. Acad. Sci. U.S.A.">
        <title>Mosaic expression of claudins in thick ascending limbs of Henle results in spatial separation of paracellular Na+ and Mg2+ transport.</title>
        <authorList>
            <person name="Milatz S."/>
            <person name="Himmerkus N."/>
            <person name="Wulfmeyer V.C."/>
            <person name="Drewell H."/>
            <person name="Mutig K."/>
            <person name="Hou J."/>
            <person name="Breiderhoff T."/>
            <person name="Mueller D."/>
            <person name="Fromm M."/>
            <person name="Bleich M."/>
            <person name="Guenzel D."/>
        </authorList>
    </citation>
    <scope>FUNCTION</scope>
    <scope>SUBUNIT</scope>
    <scope>INTERACTION WITH CLDN3 AND CLDN16</scope>
    <scope>SUBCELLULAR LOCATION</scope>
</reference>
<reference key="9">
    <citation type="journal article" date="2019" name="Commun. Biol.">
        <title>Disease-associated mutations of claudin-19 disrupt retinal neurogenesis and visual function.</title>
        <authorList>
            <person name="Wang S.B."/>
            <person name="Xu T."/>
            <person name="Peng S."/>
            <person name="Singh D."/>
            <person name="Ghiassi-Nejad M."/>
            <person name="Adelman R.A."/>
            <person name="Rizzolo L.J."/>
        </authorList>
    </citation>
    <scope>FUNCTION</scope>
    <scope>CHARACTERIZATION OF VARIANTS HOMG5 ASP-20 AND TRP-81</scope>
</reference>
<reference key="10">
    <citation type="journal article" date="2022" name="Nat. Commun.">
        <title>Nanoscale segregation of channel and barrier claudins enables paracellular ion flux.</title>
        <authorList>
            <person name="Gonschior H."/>
            <person name="Schmied C."/>
            <person name="Van der Veen R.E."/>
            <person name="Eichhorst J."/>
            <person name="Himmerkus N."/>
            <person name="Piontek J."/>
            <person name="Guenzel D."/>
            <person name="Bleich M."/>
            <person name="Furuse M."/>
            <person name="Haucke V."/>
            <person name="Lehmann M."/>
        </authorList>
    </citation>
    <scope>SUBUNIT</scope>
</reference>
<reference key="11">
    <citation type="journal article" date="2006" name="Am. J. Hum. Genet.">
        <title>Mutations in the tight-junction gene claudin 19 (CLDN19) are associated with renal magnesium wasting, renal failure, and severe ocular involvement.</title>
        <authorList>
            <person name="Konrad M."/>
            <person name="Schaller A."/>
            <person name="Seelow D."/>
            <person name="Pandey A.V."/>
            <person name="Waldegger S."/>
            <person name="Lesslauer A."/>
            <person name="Vitzthum H."/>
            <person name="Suzuki Y."/>
            <person name="Luk J.M."/>
            <person name="Becker C."/>
            <person name="Schlingmann K.P."/>
            <person name="Schmid M."/>
            <person name="Rodriguez-Soriano J."/>
            <person name="Ariceta G."/>
            <person name="Cano F."/>
            <person name="Enriquez R."/>
            <person name="Jueppner H."/>
            <person name="Bakkaloglu S.A."/>
            <person name="Hediger M.A."/>
            <person name="Gallati S."/>
            <person name="Neuhauss S.C.F."/>
            <person name="Nuernberg P."/>
            <person name="Weber S."/>
        </authorList>
    </citation>
    <scope>INVOLVEMENT IN HOMG5</scope>
    <scope>VARIANTS HOMG5 ASP-20; GLU-57 AND PRO-90</scope>
    <scope>FUNCTION</scope>
</reference>
<reference key="12">
    <citation type="journal article" date="2015" name="Calcif. Tissue Int.">
        <title>First report of a novel missense CLDN19 mutations causing familial hypomagnesemia with hypercalciuria and nephrocalcinosis in a Chinese family.</title>
        <authorList>
            <person name="Yuan T."/>
            <person name="Pang Q."/>
            <person name="Xing X."/>
            <person name="Wang X."/>
            <person name="Li Y."/>
            <person name="Li J."/>
            <person name="Wu X."/>
            <person name="Li M."/>
            <person name="Wang O."/>
            <person name="Jiang Y."/>
            <person name="Dong J."/>
            <person name="Xia W."/>
        </authorList>
    </citation>
    <scope>INVOLVEMENT IN HOMG5</scope>
    <scope>VARIANT HOMG5 TRP-81</scope>
    <scope>FUNCTION</scope>
</reference>
<feature type="chain" id="PRO_0000144781" description="Claudin-19">
    <location>
        <begin position="1"/>
        <end position="224"/>
    </location>
</feature>
<feature type="topological domain" description="Cytoplasmic" evidence="5">
    <location>
        <begin position="1"/>
        <end position="7"/>
    </location>
</feature>
<feature type="transmembrane region" description="Helical" evidence="5">
    <location>
        <begin position="8"/>
        <end position="28"/>
    </location>
</feature>
<feature type="topological domain" description="Extracellular" evidence="5">
    <location>
        <begin position="29"/>
        <end position="81"/>
    </location>
</feature>
<feature type="transmembrane region" description="Helical" evidence="5">
    <location>
        <begin position="82"/>
        <end position="102"/>
    </location>
</feature>
<feature type="topological domain" description="Cytoplasmic" evidence="5">
    <location>
        <begin position="103"/>
        <end position="117"/>
    </location>
</feature>
<feature type="transmembrane region" description="Helical" evidence="5">
    <location>
        <begin position="118"/>
        <end position="138"/>
    </location>
</feature>
<feature type="topological domain" description="Extracellular" evidence="5">
    <location>
        <begin position="139"/>
        <end position="160"/>
    </location>
</feature>
<feature type="transmembrane region" description="Helical" evidence="5">
    <location>
        <begin position="161"/>
        <end position="181"/>
    </location>
</feature>
<feature type="topological domain" description="Cytoplasmic" evidence="5">
    <location>
        <begin position="182"/>
        <end position="224"/>
    </location>
</feature>
<feature type="region of interest" description="Disordered" evidence="6">
    <location>
        <begin position="191"/>
        <end position="224"/>
    </location>
</feature>
<feature type="disulfide bond" evidence="3">
    <location>
        <begin position="54"/>
        <end position="64"/>
    </location>
</feature>
<feature type="splice variant" id="VSP_044839" description="In isoform 3." evidence="14">
    <original>LCTLTAVSWYATLVTQEFFNPSTPVNARYEFGPALFVGWASAGLAVLGGSFLCCTCPEPERPNSSPQPYRPGPSAAAREPVVKLPASAKGPLGV</original>
    <variation>MNLAQPCSWAGPQLAWPCWAAPSSAAHARSQRDPTAAHSPIGLDPLLLPESTSELRLPWPAPHPVAPLPSIQPASQHPGQGHWGIGWA</variation>
    <location>
        <begin position="131"/>
        <end position="224"/>
    </location>
</feature>
<feature type="splice variant" id="VSP_010342" description="In isoform 2." evidence="14 17">
    <original>PVVKLPASAKGPLGV</original>
    <variation>YV</variation>
    <location>
        <begin position="210"/>
        <end position="224"/>
    </location>
</feature>
<feature type="sequence variant" id="VAR_031238" description="In dbSNP:rs12065961.">
    <original>L</original>
    <variation>F</variation>
    <location>
        <position position="13"/>
    </location>
</feature>
<feature type="sequence variant" id="VAR_031239" description="In HOMG5; ER retention of the mutant protein; more than 90% decrease of homomeric interactions; loss of interaction with CLDN16; loss of cation-selective paracellular permeability; when overexpressed in the retina of PN0 mice, leads to retinal degeneration characterized by altered morphology of bipolar cells, shortened bipolar axon and dendrite lengths and decreased light response; no effect on interaction with CLDN18; dbSNP:rs118203979." evidence="7 8 9 12">
    <original>G</original>
    <variation>D</variation>
    <location>
        <position position="20"/>
    </location>
</feature>
<feature type="sequence variant" id="VAR_031240" description="In HOMG5; localizes throughout the apical part of polarized epithelia in a diffuse pattern; more than 90% decrease of homomeric interactions; loss of interaction with CLDN16; loss of cation-selective paracellular permeability; no effect on interaction with CLDN18; dbSNP:rs118203980." evidence="7 8 9">
    <original>Q</original>
    <variation>E</variation>
    <location>
        <position position="57"/>
    </location>
</feature>
<feature type="sequence variant" id="VAR_089378" description="In HOMG5; partial localization at the lateral membrane and partial intracellular; when overexpressed in the retina of PN0 mice, leads to retinal degeneration characterized by altered morphology of bipolar cells, shortened bipolar axon and dendrite lengths and decreased light response; dbSNP:rs1450421453." evidence="10 12">
    <original>R</original>
    <variation>W</variation>
    <location>
        <position position="81"/>
    </location>
</feature>
<feature type="sequence variant" id="VAR_031241" description="In HOMG5; localizes at tight junctions; slight decrease of homomeric interactions; more than 70% decrease of interaction with CLDN16 associated with impaired functional synergistic effects on ion selectivity; partial loss of cation-selective paracellular permeability; no effect on interaction with CLDN18; dbSNP:rs118203981." evidence="7 8 9">
    <original>L</original>
    <variation>P</variation>
    <location>
        <position position="90"/>
    </location>
</feature>
<feature type="sequence variant" id="VAR_089379" description="In HOMG5; localizes at tight junctions; slight decrease of homomeric interactions; more than 70% decrease of interaction with CLDN16 associated with impaired functional synergistic effects on ion selectivity; partial loss of cation-selective paracellular permeability; no effect on interaction with CLDN18." evidence="8 9">
    <original>G</original>
    <variation>R</variation>
    <location>
        <position position="123"/>
    </location>
</feature>
<feature type="sequence conflict" description="In Ref. 2; BAC04691." evidence="18" ref="2">
    <original>L</original>
    <variation>P</variation>
    <location>
        <position position="46"/>
    </location>
</feature>
<feature type="sequence conflict" description="In Ref. 2; BAH12918." evidence="18" ref="2">
    <original>R</original>
    <variation>C</variation>
    <location sequence="Q8N6F1-3">
        <position position="186"/>
    </location>
</feature>
<gene>
    <name evidence="16 20" type="primary">CLDN19</name>
</gene>
<sequence length="224" mass="23229">MANSGLQLLGYFLALGGWVGIIASTALPQWKQSSYAGDAIITAVGLYEGLWMSCASQSTGQVQCKLYDSLLALDGHIQSARALMVVAVLLGFVAMVLSVVGMKCTRVGDSNPIAKGRVAIAGGALFILAGLCTLTAVSWYATLVTQEFFNPSTPVNARYEFGPALFVGWASAGLAVLGGSFLCCTCPEPERPNSSPQPYRPGPSAAAREPVVKLPASAKGPLGV</sequence>
<protein>
    <recommendedName>
        <fullName evidence="15">Claudin-19</fullName>
    </recommendedName>
</protein>